<keyword id="KW-0998">Cell outer membrane</keyword>
<keyword id="KW-0903">Direct protein sequencing</keyword>
<keyword id="KW-0472">Membrane</keyword>
<keyword id="KW-1185">Reference proteome</keyword>
<keyword id="KW-0732">Signal</keyword>
<dbReference type="EMBL" id="U00096">
    <property type="protein sequence ID" value="AAC74852.1"/>
    <property type="molecule type" value="Genomic_DNA"/>
</dbReference>
<dbReference type="EMBL" id="AP009048">
    <property type="protein sequence ID" value="BAA15579.1"/>
    <property type="molecule type" value="Genomic_DNA"/>
</dbReference>
<dbReference type="PIR" id="F64938">
    <property type="entry name" value="F64938"/>
</dbReference>
<dbReference type="RefSeq" id="NP_416296.1">
    <property type="nucleotide sequence ID" value="NC_000913.3"/>
</dbReference>
<dbReference type="RefSeq" id="WP_000163771.1">
    <property type="nucleotide sequence ID" value="NZ_SSZK01000001.1"/>
</dbReference>
<dbReference type="BioGRID" id="4260311">
    <property type="interactions" value="190"/>
</dbReference>
<dbReference type="FunCoup" id="P0A908">
    <property type="interactions" value="28"/>
</dbReference>
<dbReference type="IntAct" id="P0A908">
    <property type="interactions" value="4"/>
</dbReference>
<dbReference type="STRING" id="511145.b1782"/>
<dbReference type="TCDB" id="1.B.93.1.2">
    <property type="family name" value="the mipa-interacting protein (mipa) family"/>
</dbReference>
<dbReference type="jPOST" id="P0A908"/>
<dbReference type="PaxDb" id="511145-b1782"/>
<dbReference type="EnsemblBacteria" id="AAC74852">
    <property type="protein sequence ID" value="AAC74852"/>
    <property type="gene ID" value="b1782"/>
</dbReference>
<dbReference type="GeneID" id="75171849"/>
<dbReference type="GeneID" id="946301"/>
<dbReference type="KEGG" id="ecj:JW1771"/>
<dbReference type="KEGG" id="eco:b1782"/>
<dbReference type="KEGG" id="ecoc:C3026_10165"/>
<dbReference type="PATRIC" id="fig|1411691.4.peg.472"/>
<dbReference type="EchoBASE" id="EB3265"/>
<dbReference type="eggNOG" id="COG3713">
    <property type="taxonomic scope" value="Bacteria"/>
</dbReference>
<dbReference type="HOGENOM" id="CLU_063465_3_0_6"/>
<dbReference type="InParanoid" id="P0A908"/>
<dbReference type="OMA" id="VKDSPMV"/>
<dbReference type="OrthoDB" id="8562138at2"/>
<dbReference type="PhylomeDB" id="P0A908"/>
<dbReference type="BioCyc" id="EcoCyc:G6968-MONOMER"/>
<dbReference type="BioCyc" id="MetaCyc:G6968-MONOMER"/>
<dbReference type="PRO" id="PR:P0A908"/>
<dbReference type="Proteomes" id="UP000000625">
    <property type="component" value="Chromosome"/>
</dbReference>
<dbReference type="GO" id="GO:0009279">
    <property type="term" value="C:cell outer membrane"/>
    <property type="evidence" value="ECO:0000314"/>
    <property type="project" value="EcoCyc"/>
</dbReference>
<dbReference type="GO" id="GO:0030674">
    <property type="term" value="F:protein-macromolecule adaptor activity"/>
    <property type="evidence" value="ECO:0000353"/>
    <property type="project" value="EcoCyc"/>
</dbReference>
<dbReference type="GO" id="GO:0009252">
    <property type="term" value="P:peptidoglycan biosynthetic process"/>
    <property type="evidence" value="ECO:0000353"/>
    <property type="project" value="EcoCyc"/>
</dbReference>
<dbReference type="InterPro" id="IPR010583">
    <property type="entry name" value="MipA"/>
</dbReference>
<dbReference type="PANTHER" id="PTHR38776">
    <property type="entry name" value="MLTA-INTERACTING PROTEIN-RELATED"/>
    <property type="match status" value="1"/>
</dbReference>
<dbReference type="PANTHER" id="PTHR38776:SF1">
    <property type="entry name" value="MLTA-INTERACTING PROTEIN-RELATED"/>
    <property type="match status" value="1"/>
</dbReference>
<dbReference type="Pfam" id="PF06629">
    <property type="entry name" value="MipA"/>
    <property type="match status" value="1"/>
</dbReference>
<feature type="signal peptide" evidence="1">
    <location>
        <begin position="1"/>
        <end position="22"/>
    </location>
</feature>
<feature type="chain" id="PRO_0000019092" description="MltA-interacting protein">
    <location>
        <begin position="23"/>
        <end position="248"/>
    </location>
</feature>
<feature type="sequence conflict" description="In Ref. 4; AA sequence." evidence="3" ref="4">
    <original>V</original>
    <variation>N</variation>
    <location>
        <position position="34"/>
    </location>
</feature>
<proteinExistence type="evidence at protein level"/>
<organism>
    <name type="scientific">Escherichia coli (strain K12)</name>
    <dbReference type="NCBI Taxonomy" id="83333"/>
    <lineage>
        <taxon>Bacteria</taxon>
        <taxon>Pseudomonadati</taxon>
        <taxon>Pseudomonadota</taxon>
        <taxon>Gammaproteobacteria</taxon>
        <taxon>Enterobacterales</taxon>
        <taxon>Enterobacteriaceae</taxon>
        <taxon>Escherichia</taxon>
    </lineage>
</organism>
<protein>
    <recommendedName>
        <fullName>MltA-interacting protein</fullName>
    </recommendedName>
</protein>
<name>MIPA_ECOLI</name>
<comment type="function">
    <text>May serve as a scaffold protein required for the formation of a complex with MrcB/PonB and MltA, this complex could play a role in enlargement and septation of the murein sacculus.</text>
</comment>
<comment type="subunit">
    <text>Forms a trimeric complex with MrcB and MltA in vitro.</text>
</comment>
<comment type="subcellular location">
    <subcellularLocation>
        <location evidence="2">Cell outer membrane</location>
    </subcellularLocation>
</comment>
<comment type="similarity">
    <text evidence="3">Belongs to the MipA/OmpV family.</text>
</comment>
<sequence>MTKLKLLALGVLIATSAGVAHAEGKFSLGAGVGVVEHPYKDYDTDVYPVPVINYEGDNFWFRGLGGGYYLWNDATDKLSITAYWSPLYFKAKDSGDHQMRHLDDRKSTMMAGLSYAHFTQYGYLRTTLAGDTLDNSNGIVWDMAWLYRYTNGGLTVTPGIGVQWNSENQNEYYYGVSRKESARSGLRGYNPNDSWSPYLELSASYNFLGDWSVYGTARYTRLSDEVTDSPMVDKSWTGLISTGITYKF</sequence>
<gene>
    <name type="primary">mipA</name>
    <name type="synonym">yeaF</name>
    <name type="ordered locus">b1782</name>
    <name type="ordered locus">JW1771</name>
</gene>
<evidence type="ECO:0000269" key="1">
    <source>
    </source>
</evidence>
<evidence type="ECO:0000269" key="2">
    <source>
    </source>
</evidence>
<evidence type="ECO:0000305" key="3"/>
<accession>P0A908</accession>
<accession>O07962</accession>
<accession>P77486</accession>
<reference key="1">
    <citation type="journal article" date="1996" name="DNA Res.">
        <title>A 460-kb DNA sequence of the Escherichia coli K-12 genome corresponding to the 40.1-50.0 min region on the linkage map.</title>
        <authorList>
            <person name="Itoh T."/>
            <person name="Aiba H."/>
            <person name="Baba T."/>
            <person name="Fujita K."/>
            <person name="Hayashi K."/>
            <person name="Inada T."/>
            <person name="Isono K."/>
            <person name="Kasai H."/>
            <person name="Kimura S."/>
            <person name="Kitakawa M."/>
            <person name="Kitagawa M."/>
            <person name="Makino K."/>
            <person name="Miki T."/>
            <person name="Mizobuchi K."/>
            <person name="Mori H."/>
            <person name="Mori T."/>
            <person name="Motomura K."/>
            <person name="Nakade S."/>
            <person name="Nakamura Y."/>
            <person name="Nashimoto H."/>
            <person name="Nishio Y."/>
            <person name="Oshima T."/>
            <person name="Saito N."/>
            <person name="Sampei G."/>
            <person name="Seki Y."/>
            <person name="Sivasundaram S."/>
            <person name="Tagami H."/>
            <person name="Takeda J."/>
            <person name="Takemoto K."/>
            <person name="Wada C."/>
            <person name="Yamamoto Y."/>
            <person name="Horiuchi T."/>
        </authorList>
    </citation>
    <scope>NUCLEOTIDE SEQUENCE [LARGE SCALE GENOMIC DNA]</scope>
    <source>
        <strain>K12 / W3110 / ATCC 27325 / DSM 5911</strain>
    </source>
</reference>
<reference key="2">
    <citation type="journal article" date="1997" name="Science">
        <title>The complete genome sequence of Escherichia coli K-12.</title>
        <authorList>
            <person name="Blattner F.R."/>
            <person name="Plunkett G. III"/>
            <person name="Bloch C.A."/>
            <person name="Perna N.T."/>
            <person name="Burland V."/>
            <person name="Riley M."/>
            <person name="Collado-Vides J."/>
            <person name="Glasner J.D."/>
            <person name="Rode C.K."/>
            <person name="Mayhew G.F."/>
            <person name="Gregor J."/>
            <person name="Davis N.W."/>
            <person name="Kirkpatrick H.A."/>
            <person name="Goeden M.A."/>
            <person name="Rose D.J."/>
            <person name="Mau B."/>
            <person name="Shao Y."/>
        </authorList>
    </citation>
    <scope>NUCLEOTIDE SEQUENCE [LARGE SCALE GENOMIC DNA]</scope>
    <source>
        <strain>K12 / MG1655 / ATCC 47076</strain>
    </source>
</reference>
<reference key="3">
    <citation type="journal article" date="2006" name="Mol. Syst. Biol.">
        <title>Highly accurate genome sequences of Escherichia coli K-12 strains MG1655 and W3110.</title>
        <authorList>
            <person name="Hayashi K."/>
            <person name="Morooka N."/>
            <person name="Yamamoto Y."/>
            <person name="Fujita K."/>
            <person name="Isono K."/>
            <person name="Choi S."/>
            <person name="Ohtsubo E."/>
            <person name="Baba T."/>
            <person name="Wanner B.L."/>
            <person name="Mori H."/>
            <person name="Horiuchi T."/>
        </authorList>
    </citation>
    <scope>NUCLEOTIDE SEQUENCE [LARGE SCALE GENOMIC DNA]</scope>
    <source>
        <strain>K12 / W3110 / ATCC 27325 / DSM 5911</strain>
    </source>
</reference>
<reference key="4">
    <citation type="journal article" date="1999" name="J. Biol. Chem.">
        <title>Demonstration of molecular interactions between the murein polymerase PBP1B, the lytic transglycosylase MltA, and the scaffolding protein MipA of Escherichia coli.</title>
        <authorList>
            <person name="Vollmer W."/>
            <person name="von Rechenberg M."/>
            <person name="Hoeltje J.-V."/>
        </authorList>
    </citation>
    <scope>PROTEIN SEQUENCE OF 23-35</scope>
    <scope>INTERACTION WITH MLTA AND MRCB/PONB</scope>
    <source>
        <strain>K12 / MC1061 / ATCC 53338 / DSM 7140</strain>
    </source>
</reference>
<reference key="5">
    <citation type="journal article" date="2000" name="Eur. J. Biochem.">
        <title>Proteomic analysis of the Escherichia coli outer membrane.</title>
        <authorList>
            <person name="Molloy M.P."/>
            <person name="Herbert B.R."/>
            <person name="Slade M.B."/>
            <person name="Rabilloud T."/>
            <person name="Nouwens A.S."/>
            <person name="Williams K.L."/>
            <person name="Gooley A.A."/>
        </authorList>
    </citation>
    <scope>IDENTIFICATION BY MASS SPECTROMETRY</scope>
</reference>
<reference key="6">
    <citation type="journal article" date="2005" name="J. Biol. Chem.">
        <title>Protein complexes of the Escherichia coli cell envelope.</title>
        <authorList>
            <person name="Stenberg F."/>
            <person name="Chovanec P."/>
            <person name="Maslen S.L."/>
            <person name="Robinson C.V."/>
            <person name="Ilag L."/>
            <person name="von Heijne G."/>
            <person name="Daley D.O."/>
        </authorList>
    </citation>
    <scope>SUBCELLULAR LOCATION</scope>
    <source>
        <strain>BL21-DE3</strain>
    </source>
</reference>